<reference key="1">
    <citation type="journal article" date="2002" name="J. Bacteriol.">
        <title>Degradation of aromatics and chloroaromatics by Pseudomonas sp. strain B13: cloning, characterization, and analysis of sequences encoding 3-oxoadipate:succinyl-coenzyme A (CoA) transferase and 3-oxoadipyl-CoA thiolase.</title>
        <authorList>
            <person name="Goebel M."/>
            <person name="Kassel-Cati K."/>
            <person name="Schmidt E."/>
            <person name="Reineke W."/>
        </authorList>
    </citation>
    <scope>NUCLEOTIDE SEQUENCE [GENOMIC DNA]</scope>
</reference>
<reference key="2">
    <citation type="journal article" date="2002" name="J. Bacteriol.">
        <title>Degradation of aromatics and chloroaromatics by Pseudomonas sp. strain B13: purification and characterization of 3-oxoadipate:succinyl-coenzyme A (CoA) transferase and 3-oxoadipyl-CoA thiolase.</title>
        <authorList>
            <person name="Kaschabek S.R."/>
            <person name="Kuhn B."/>
            <person name="Mueller D."/>
            <person name="Schmidt E."/>
            <person name="Reineke W."/>
        </authorList>
    </citation>
    <scope>PROTEIN SEQUENCE OF 2-31</scope>
    <scope>CATALYTIC ACTIVITY</scope>
    <scope>BIOPHYSICOCHEMICAL PROPERTIES</scope>
    <scope>SUBUNIT</scope>
</reference>
<organism>
    <name type="scientific">Pseudomonas knackmussii (strain DSM 6978 / CCUG 54928 / LMG 23759 / B13)</name>
    <dbReference type="NCBI Taxonomy" id="1301098"/>
    <lineage>
        <taxon>Bacteria</taxon>
        <taxon>Pseudomonadati</taxon>
        <taxon>Pseudomonadota</taxon>
        <taxon>Gammaproteobacteria</taxon>
        <taxon>Pseudomonadales</taxon>
        <taxon>Pseudomonadaceae</taxon>
        <taxon>Pseudomonas</taxon>
    </lineage>
</organism>
<accession>Q8VPF3</accession>
<name>CATI_PSEKB</name>
<gene>
    <name type="primary">catI</name>
</gene>
<feature type="initiator methionine" description="Removed" evidence="1">
    <location>
        <position position="1"/>
    </location>
</feature>
<feature type="chain" id="PRO_0000337673" description="3-oxoadipate CoA-transferase subunit A">
    <location>
        <begin position="2"/>
        <end position="282"/>
    </location>
</feature>
<protein>
    <recommendedName>
        <fullName>3-oxoadipate CoA-transferase subunit A</fullName>
        <ecNumber>2.8.3.6</ecNumber>
    </recommendedName>
    <alternativeName>
        <fullName>3-oxoadipate:succinyl-CoA transferase subunit A</fullName>
    </alternativeName>
    <alternativeName>
        <fullName>Beta-ketoadipate:succinyl-CoA transferase subunit A</fullName>
    </alternativeName>
</protein>
<comment type="function">
    <text>Catalyzes the CoA transfer from succinate to 3-oxoadipate (beta-ketoadipate).</text>
</comment>
<comment type="catalytic activity">
    <reaction evidence="1">
        <text>3-oxoadipate + succinyl-CoA = 3-oxoadipyl-CoA + succinate</text>
        <dbReference type="Rhea" id="RHEA:12048"/>
        <dbReference type="ChEBI" id="CHEBI:15775"/>
        <dbReference type="ChEBI" id="CHEBI:30031"/>
        <dbReference type="ChEBI" id="CHEBI:57292"/>
        <dbReference type="ChEBI" id="CHEBI:57348"/>
        <dbReference type="EC" id="2.8.3.6"/>
    </reaction>
</comment>
<comment type="biophysicochemical properties">
    <kinetics>
        <KM evidence="1">0.4 mM for 3-oxoadipate</KM>
        <KM evidence="1">0.2 mM for succinyl-CoA</KM>
    </kinetics>
    <phDependence>
        <text evidence="1">Optimum pH is 8.4.</text>
    </phDependence>
</comment>
<comment type="pathway">
    <text>Aromatic compound metabolism; beta-ketoadipate pathway; acetyl-CoA and succinyl-CoA from 3-oxoadipate: step 1/2.</text>
</comment>
<comment type="subunit">
    <text evidence="1">Heterotetramer composed of 2 A and 2 B subunits.</text>
</comment>
<comment type="similarity">
    <text evidence="2">Belongs to the 3-oxoacid CoA-transferase subunit A family.</text>
</comment>
<sequence length="282" mass="30973">MAELLTLREAVERFVNDGDTVALEGFTHLIPTAASHEIIRQGKKDLHLVRMTPDLVYDLLIGAGCARKLTFSWGGNPGVGSLHRLRDAVEKGWPNALEIDEHSHADLANSYVAGASGLPFAVLRAYAGSDLPKVNPNIKFINCPFTGEQLAAVPSVRPDVTVIHAQKADRKGNVLLWGILGVQKEAALAAKRCIVTVEEIVDDLNAPMNSCVLPTWALSAVCHVPGGSHPSYAHGYYERDNRFYQAWDPIARDRETFTAWIDEYIRGTKDFSEFQAKIAEGK</sequence>
<evidence type="ECO:0000269" key="1">
    <source>
    </source>
</evidence>
<evidence type="ECO:0000305" key="2"/>
<dbReference type="EC" id="2.8.3.6"/>
<dbReference type="EMBL" id="AY044272">
    <property type="protein sequence ID" value="AAL02405.1"/>
    <property type="molecule type" value="Genomic_DNA"/>
</dbReference>
<dbReference type="RefSeq" id="WP_043252822.1">
    <property type="nucleotide sequence ID" value="NZ_HG322950.1"/>
</dbReference>
<dbReference type="SMR" id="Q8VPF3"/>
<dbReference type="STRING" id="1301098.PKB_2952"/>
<dbReference type="eggNOG" id="COG1788">
    <property type="taxonomic scope" value="Bacteria"/>
</dbReference>
<dbReference type="OrthoDB" id="9777193at2"/>
<dbReference type="BRENDA" id="2.8.3.6">
    <property type="organism ID" value="5180"/>
</dbReference>
<dbReference type="SABIO-RK" id="Q8VPF3"/>
<dbReference type="UniPathway" id="UPA00157">
    <property type="reaction ID" value="UER00262"/>
</dbReference>
<dbReference type="GO" id="GO:0047569">
    <property type="term" value="F:3-oxoadipate CoA-transferase activity"/>
    <property type="evidence" value="ECO:0007669"/>
    <property type="project" value="UniProtKB-EC"/>
</dbReference>
<dbReference type="GO" id="GO:0042952">
    <property type="term" value="P:beta-ketoadipate pathway"/>
    <property type="evidence" value="ECO:0007669"/>
    <property type="project" value="UniProtKB-UniPathway"/>
</dbReference>
<dbReference type="Gene3D" id="3.30.30.40">
    <property type="match status" value="1"/>
</dbReference>
<dbReference type="Gene3D" id="3.40.1080.10">
    <property type="entry name" value="Glutaconate Coenzyme A-transferase"/>
    <property type="match status" value="1"/>
</dbReference>
<dbReference type="InterPro" id="IPR004165">
    <property type="entry name" value="CoA_trans_fam_I"/>
</dbReference>
<dbReference type="InterPro" id="IPR037171">
    <property type="entry name" value="NagB/RpiA_transferase-like"/>
</dbReference>
<dbReference type="PANTHER" id="PTHR43293">
    <property type="entry name" value="ACETATE COA-TRANSFERASE YDIF"/>
    <property type="match status" value="1"/>
</dbReference>
<dbReference type="PANTHER" id="PTHR43293:SF3">
    <property type="entry name" value="CHOLESTEROL RING-CLEAVING HYDROLASE IPDB SUBUNIT"/>
    <property type="match status" value="1"/>
</dbReference>
<dbReference type="Pfam" id="PF01144">
    <property type="entry name" value="CoA_trans"/>
    <property type="match status" value="1"/>
</dbReference>
<dbReference type="SMART" id="SM00882">
    <property type="entry name" value="CoA_trans"/>
    <property type="match status" value="1"/>
</dbReference>
<dbReference type="SUPFAM" id="SSF100950">
    <property type="entry name" value="NagB/RpiA/CoA transferase-like"/>
    <property type="match status" value="1"/>
</dbReference>
<proteinExistence type="evidence at protein level"/>
<keyword id="KW-0058">Aromatic hydrocarbons catabolism</keyword>
<keyword id="KW-0903">Direct protein sequencing</keyword>
<keyword id="KW-0808">Transferase</keyword>